<sequence length="116" mass="13192">MNNIIKMLNDEQMKQDVPEFGAGDTVVVKVRVVEGGKERLQAFEGVVIAKRNRGLHSAFTVRKISNGEGVERAFQTHSPLISSIEVKRRGRVRRAKLYYLRERSGKSARIREKLAK</sequence>
<feature type="chain" id="PRO_1000049742" description="Large ribosomal subunit protein bL19">
    <location>
        <begin position="1"/>
        <end position="116"/>
    </location>
</feature>
<reference key="1">
    <citation type="submission" date="2007-03" db="EMBL/GenBank/DDBJ databases">
        <title>Complete sequence of Shewanella loihica PV-4.</title>
        <authorList>
            <consortium name="US DOE Joint Genome Institute"/>
            <person name="Copeland A."/>
            <person name="Lucas S."/>
            <person name="Lapidus A."/>
            <person name="Barry K."/>
            <person name="Detter J.C."/>
            <person name="Glavina del Rio T."/>
            <person name="Hammon N."/>
            <person name="Israni S."/>
            <person name="Dalin E."/>
            <person name="Tice H."/>
            <person name="Pitluck S."/>
            <person name="Chain P."/>
            <person name="Malfatti S."/>
            <person name="Shin M."/>
            <person name="Vergez L."/>
            <person name="Schmutz J."/>
            <person name="Larimer F."/>
            <person name="Land M."/>
            <person name="Hauser L."/>
            <person name="Kyrpides N."/>
            <person name="Mikhailova N."/>
            <person name="Romine M.F."/>
            <person name="Serres G."/>
            <person name="Fredrickson J."/>
            <person name="Tiedje J."/>
            <person name="Richardson P."/>
        </authorList>
    </citation>
    <scope>NUCLEOTIDE SEQUENCE [LARGE SCALE GENOMIC DNA]</scope>
    <source>
        <strain>ATCC BAA-1088 / PV-4</strain>
    </source>
</reference>
<organism>
    <name type="scientific">Shewanella loihica (strain ATCC BAA-1088 / PV-4)</name>
    <dbReference type="NCBI Taxonomy" id="323850"/>
    <lineage>
        <taxon>Bacteria</taxon>
        <taxon>Pseudomonadati</taxon>
        <taxon>Pseudomonadota</taxon>
        <taxon>Gammaproteobacteria</taxon>
        <taxon>Alteromonadales</taxon>
        <taxon>Shewanellaceae</taxon>
        <taxon>Shewanella</taxon>
    </lineage>
</organism>
<evidence type="ECO:0000255" key="1">
    <source>
        <dbReference type="HAMAP-Rule" id="MF_00402"/>
    </source>
</evidence>
<evidence type="ECO:0000305" key="2"/>
<name>RL19_SHELP</name>
<gene>
    <name evidence="1" type="primary">rplS</name>
    <name type="ordered locus">Shew_1066</name>
</gene>
<keyword id="KW-1185">Reference proteome</keyword>
<keyword id="KW-0687">Ribonucleoprotein</keyword>
<keyword id="KW-0689">Ribosomal protein</keyword>
<protein>
    <recommendedName>
        <fullName evidence="1">Large ribosomal subunit protein bL19</fullName>
    </recommendedName>
    <alternativeName>
        <fullName evidence="2">50S ribosomal protein L19</fullName>
    </alternativeName>
</protein>
<proteinExistence type="inferred from homology"/>
<comment type="function">
    <text evidence="1">This protein is located at the 30S-50S ribosomal subunit interface and may play a role in the structure and function of the aminoacyl-tRNA binding site.</text>
</comment>
<comment type="similarity">
    <text evidence="1">Belongs to the bacterial ribosomal protein bL19 family.</text>
</comment>
<dbReference type="EMBL" id="CP000606">
    <property type="protein sequence ID" value="ABO22937.1"/>
    <property type="molecule type" value="Genomic_DNA"/>
</dbReference>
<dbReference type="RefSeq" id="WP_011864870.1">
    <property type="nucleotide sequence ID" value="NC_009092.1"/>
</dbReference>
<dbReference type="SMR" id="A3QBT9"/>
<dbReference type="STRING" id="323850.Shew_1066"/>
<dbReference type="KEGG" id="slo:Shew_1066"/>
<dbReference type="eggNOG" id="COG0335">
    <property type="taxonomic scope" value="Bacteria"/>
</dbReference>
<dbReference type="HOGENOM" id="CLU_103507_1_0_6"/>
<dbReference type="OrthoDB" id="9803541at2"/>
<dbReference type="Proteomes" id="UP000001558">
    <property type="component" value="Chromosome"/>
</dbReference>
<dbReference type="GO" id="GO:0022625">
    <property type="term" value="C:cytosolic large ribosomal subunit"/>
    <property type="evidence" value="ECO:0007669"/>
    <property type="project" value="TreeGrafter"/>
</dbReference>
<dbReference type="GO" id="GO:0003735">
    <property type="term" value="F:structural constituent of ribosome"/>
    <property type="evidence" value="ECO:0007669"/>
    <property type="project" value="InterPro"/>
</dbReference>
<dbReference type="GO" id="GO:0006412">
    <property type="term" value="P:translation"/>
    <property type="evidence" value="ECO:0007669"/>
    <property type="project" value="UniProtKB-UniRule"/>
</dbReference>
<dbReference type="FunFam" id="2.30.30.790:FF:000001">
    <property type="entry name" value="50S ribosomal protein L19"/>
    <property type="match status" value="1"/>
</dbReference>
<dbReference type="Gene3D" id="2.30.30.790">
    <property type="match status" value="1"/>
</dbReference>
<dbReference type="HAMAP" id="MF_00402">
    <property type="entry name" value="Ribosomal_bL19"/>
    <property type="match status" value="1"/>
</dbReference>
<dbReference type="InterPro" id="IPR001857">
    <property type="entry name" value="Ribosomal_bL19"/>
</dbReference>
<dbReference type="InterPro" id="IPR018257">
    <property type="entry name" value="Ribosomal_bL19_CS"/>
</dbReference>
<dbReference type="InterPro" id="IPR038657">
    <property type="entry name" value="Ribosomal_bL19_sf"/>
</dbReference>
<dbReference type="InterPro" id="IPR008991">
    <property type="entry name" value="Translation_prot_SH3-like_sf"/>
</dbReference>
<dbReference type="NCBIfam" id="TIGR01024">
    <property type="entry name" value="rplS_bact"/>
    <property type="match status" value="1"/>
</dbReference>
<dbReference type="PANTHER" id="PTHR15680:SF9">
    <property type="entry name" value="LARGE RIBOSOMAL SUBUNIT PROTEIN BL19M"/>
    <property type="match status" value="1"/>
</dbReference>
<dbReference type="PANTHER" id="PTHR15680">
    <property type="entry name" value="RIBOSOMAL PROTEIN L19"/>
    <property type="match status" value="1"/>
</dbReference>
<dbReference type="Pfam" id="PF01245">
    <property type="entry name" value="Ribosomal_L19"/>
    <property type="match status" value="1"/>
</dbReference>
<dbReference type="PIRSF" id="PIRSF002191">
    <property type="entry name" value="Ribosomal_L19"/>
    <property type="match status" value="1"/>
</dbReference>
<dbReference type="PRINTS" id="PR00061">
    <property type="entry name" value="RIBOSOMALL19"/>
</dbReference>
<dbReference type="SUPFAM" id="SSF50104">
    <property type="entry name" value="Translation proteins SH3-like domain"/>
    <property type="match status" value="1"/>
</dbReference>
<dbReference type="PROSITE" id="PS01015">
    <property type="entry name" value="RIBOSOMAL_L19"/>
    <property type="match status" value="1"/>
</dbReference>
<accession>A3QBT9</accession>